<proteinExistence type="inferred from homology"/>
<sequence length="155" mass="18024">MRRRRAERRQIPPDPVYGDVLVAKLINKVMWDGKKTIAQKIVYGAFDIIKEKMKKDPLEVFRQAVENVKPVLEVRPRRVGGATYQVPIEVQEPRRTSLAIRWIVEAARAKKGRPMKEKLAEEIMAAYNNTGTAIKKKEDTHRMAEANRAFAHYRW</sequence>
<accession>B9K882</accession>
<organism>
    <name type="scientific">Thermotoga neapolitana (strain ATCC 49049 / DSM 4359 / NBRC 107923 / NS-E)</name>
    <dbReference type="NCBI Taxonomy" id="309803"/>
    <lineage>
        <taxon>Bacteria</taxon>
        <taxon>Thermotogati</taxon>
        <taxon>Thermotogota</taxon>
        <taxon>Thermotogae</taxon>
        <taxon>Thermotogales</taxon>
        <taxon>Thermotogaceae</taxon>
        <taxon>Thermotoga</taxon>
    </lineage>
</organism>
<reference key="1">
    <citation type="submission" date="2007-11" db="EMBL/GenBank/DDBJ databases">
        <title>The genome sequence of the hyperthermophilic bacterium Thermotoga neapolitana.</title>
        <authorList>
            <person name="Lim S.K."/>
            <person name="Kim J.S."/>
            <person name="Cha S.H."/>
            <person name="Park B.C."/>
            <person name="Lee D.S."/>
            <person name="Tae H.S."/>
            <person name="Kim S.-J."/>
            <person name="Kim J.J."/>
            <person name="Park K.J."/>
            <person name="Lee S.Y."/>
        </authorList>
    </citation>
    <scope>NUCLEOTIDE SEQUENCE [LARGE SCALE GENOMIC DNA]</scope>
    <source>
        <strain>ATCC 49049 / DSM 4359 / NBRC 107923 / NS-E</strain>
    </source>
</reference>
<dbReference type="EMBL" id="CP000916">
    <property type="protein sequence ID" value="ACM23165.1"/>
    <property type="molecule type" value="Genomic_DNA"/>
</dbReference>
<dbReference type="RefSeq" id="WP_015919482.1">
    <property type="nucleotide sequence ID" value="NC_011978.1"/>
</dbReference>
<dbReference type="SMR" id="B9K882"/>
<dbReference type="STRING" id="309803.CTN_0989"/>
<dbReference type="KEGG" id="tna:CTN_0989"/>
<dbReference type="eggNOG" id="COG0049">
    <property type="taxonomic scope" value="Bacteria"/>
</dbReference>
<dbReference type="HOGENOM" id="CLU_072226_1_1_0"/>
<dbReference type="Proteomes" id="UP000000445">
    <property type="component" value="Chromosome"/>
</dbReference>
<dbReference type="GO" id="GO:0015935">
    <property type="term" value="C:small ribosomal subunit"/>
    <property type="evidence" value="ECO:0007669"/>
    <property type="project" value="InterPro"/>
</dbReference>
<dbReference type="GO" id="GO:0019843">
    <property type="term" value="F:rRNA binding"/>
    <property type="evidence" value="ECO:0007669"/>
    <property type="project" value="UniProtKB-UniRule"/>
</dbReference>
<dbReference type="GO" id="GO:0003735">
    <property type="term" value="F:structural constituent of ribosome"/>
    <property type="evidence" value="ECO:0007669"/>
    <property type="project" value="InterPro"/>
</dbReference>
<dbReference type="GO" id="GO:0000049">
    <property type="term" value="F:tRNA binding"/>
    <property type="evidence" value="ECO:0007669"/>
    <property type="project" value="UniProtKB-UniRule"/>
</dbReference>
<dbReference type="GO" id="GO:0006412">
    <property type="term" value="P:translation"/>
    <property type="evidence" value="ECO:0007669"/>
    <property type="project" value="UniProtKB-UniRule"/>
</dbReference>
<dbReference type="CDD" id="cd14869">
    <property type="entry name" value="uS7_Bacteria"/>
    <property type="match status" value="1"/>
</dbReference>
<dbReference type="FunFam" id="1.10.455.10:FF:000001">
    <property type="entry name" value="30S ribosomal protein S7"/>
    <property type="match status" value="1"/>
</dbReference>
<dbReference type="Gene3D" id="1.10.455.10">
    <property type="entry name" value="Ribosomal protein S7 domain"/>
    <property type="match status" value="1"/>
</dbReference>
<dbReference type="HAMAP" id="MF_00480_B">
    <property type="entry name" value="Ribosomal_uS7_B"/>
    <property type="match status" value="1"/>
</dbReference>
<dbReference type="InterPro" id="IPR000235">
    <property type="entry name" value="Ribosomal_uS7"/>
</dbReference>
<dbReference type="InterPro" id="IPR005717">
    <property type="entry name" value="Ribosomal_uS7_bac/org-type"/>
</dbReference>
<dbReference type="InterPro" id="IPR020606">
    <property type="entry name" value="Ribosomal_uS7_CS"/>
</dbReference>
<dbReference type="InterPro" id="IPR023798">
    <property type="entry name" value="Ribosomal_uS7_dom"/>
</dbReference>
<dbReference type="InterPro" id="IPR036823">
    <property type="entry name" value="Ribosomal_uS7_dom_sf"/>
</dbReference>
<dbReference type="NCBIfam" id="TIGR01029">
    <property type="entry name" value="rpsG_bact"/>
    <property type="match status" value="1"/>
</dbReference>
<dbReference type="PANTHER" id="PTHR11205">
    <property type="entry name" value="RIBOSOMAL PROTEIN S7"/>
    <property type="match status" value="1"/>
</dbReference>
<dbReference type="Pfam" id="PF00177">
    <property type="entry name" value="Ribosomal_S7"/>
    <property type="match status" value="1"/>
</dbReference>
<dbReference type="PIRSF" id="PIRSF002122">
    <property type="entry name" value="RPS7p_RPS7a_RPS5e_RPS7o"/>
    <property type="match status" value="1"/>
</dbReference>
<dbReference type="SUPFAM" id="SSF47973">
    <property type="entry name" value="Ribosomal protein S7"/>
    <property type="match status" value="1"/>
</dbReference>
<dbReference type="PROSITE" id="PS00052">
    <property type="entry name" value="RIBOSOMAL_S7"/>
    <property type="match status" value="1"/>
</dbReference>
<protein>
    <recommendedName>
        <fullName evidence="1">Small ribosomal subunit protein uS7</fullName>
    </recommendedName>
    <alternativeName>
        <fullName evidence="2">30S ribosomal protein S7</fullName>
    </alternativeName>
</protein>
<evidence type="ECO:0000255" key="1">
    <source>
        <dbReference type="HAMAP-Rule" id="MF_00480"/>
    </source>
</evidence>
<evidence type="ECO:0000305" key="2"/>
<gene>
    <name evidence="1" type="primary">rpsG</name>
    <name type="ordered locus">CTN_0989</name>
</gene>
<comment type="function">
    <text evidence="1">One of the primary rRNA binding proteins, it binds directly to 16S rRNA where it nucleates assembly of the head domain of the 30S subunit. Is located at the subunit interface close to the decoding center, probably blocks exit of the E-site tRNA.</text>
</comment>
<comment type="subunit">
    <text evidence="1">Part of the 30S ribosomal subunit. Contacts proteins S9 and S11.</text>
</comment>
<comment type="similarity">
    <text evidence="1">Belongs to the universal ribosomal protein uS7 family.</text>
</comment>
<keyword id="KW-0687">Ribonucleoprotein</keyword>
<keyword id="KW-0689">Ribosomal protein</keyword>
<keyword id="KW-0694">RNA-binding</keyword>
<keyword id="KW-0699">rRNA-binding</keyword>
<keyword id="KW-0820">tRNA-binding</keyword>
<name>RS7_THENN</name>
<feature type="chain" id="PRO_1000135631" description="Small ribosomal subunit protein uS7">
    <location>
        <begin position="1"/>
        <end position="155"/>
    </location>
</feature>